<organism>
    <name type="scientific">Olivierus martensii</name>
    <name type="common">Manchurian scorpion</name>
    <name type="synonym">Mesobuthus martensii</name>
    <dbReference type="NCBI Taxonomy" id="34649"/>
    <lineage>
        <taxon>Eukaryota</taxon>
        <taxon>Metazoa</taxon>
        <taxon>Ecdysozoa</taxon>
        <taxon>Arthropoda</taxon>
        <taxon>Chelicerata</taxon>
        <taxon>Arachnida</taxon>
        <taxon>Scorpiones</taxon>
        <taxon>Buthida</taxon>
        <taxon>Buthoidea</taxon>
        <taxon>Buthidae</taxon>
        <taxon>Olivierus</taxon>
    </lineage>
</organism>
<comment type="function">
    <text>Excitatory insect beta-toxins induce a spastic paralysis. They bind voltage-independently at site-4 of sodium channels (Nav) and shift the voltage of activation toward more negative potentials thereby affecting sodium channel activation and promoting spontaneous and repetitive firing. This toxin shows an evident analgesic effect on mice, but is devoid of mammalian toxicity.</text>
</comment>
<comment type="subcellular location">
    <subcellularLocation>
        <location evidence="1">Secreted</location>
    </subcellularLocation>
</comment>
<comment type="tissue specificity">
    <text evidence="3">Expressed by the venom gland.</text>
</comment>
<comment type="mass spectrometry"/>
<comment type="similarity">
    <text evidence="2">Belongs to the long (4 C-C) scorpion toxin superfamily. Sodium channel inhibitor family. Beta subfamily.</text>
</comment>
<sequence>KKNGYAVDSSGKVAE</sequence>
<feature type="chain" id="PRO_0000310537" description="Insect toxin BmK AngP1">
    <location>
        <begin position="1"/>
        <end position="15" status="greater than"/>
    </location>
</feature>
<feature type="non-terminal residue" evidence="3">
    <location>
        <position position="15"/>
    </location>
</feature>
<name>SIXP1_OLIMR</name>
<keyword id="KW-0903">Direct protein sequencing</keyword>
<keyword id="KW-0872">Ion channel impairing toxin</keyword>
<keyword id="KW-0528">Neurotoxin</keyword>
<keyword id="KW-0964">Secreted</keyword>
<keyword id="KW-0800">Toxin</keyword>
<keyword id="KW-0738">Voltage-gated sodium channel impairing toxin</keyword>
<reference key="1">
    <citation type="journal article" date="2001" name="J. Pept. Res.">
        <title>A new insect neurotoxin AngP1 with analgesic effect from the scorpion Buthus martensii Karsch: purification and characterization.</title>
        <authorList>
            <person name="Guan R.-J."/>
            <person name="Wang M."/>
            <person name="Wang D."/>
            <person name="Wang D.-C."/>
        </authorList>
    </citation>
    <scope>PROTEIN SEQUENCE</scope>
    <scope>MASS SPECTROMETRY</scope>
    <scope>CRYSTALLIZATION</scope>
    <scope>SUBCELLULAR LOCATION</scope>
    <source>
        <tissue>Venom</tissue>
    </source>
</reference>
<evidence type="ECO:0000269" key="1">
    <source>
    </source>
</evidence>
<evidence type="ECO:0000305" key="2"/>
<evidence type="ECO:0000305" key="3">
    <source>
    </source>
</evidence>
<dbReference type="GO" id="GO:0005576">
    <property type="term" value="C:extracellular region"/>
    <property type="evidence" value="ECO:0007669"/>
    <property type="project" value="UniProtKB-SubCell"/>
</dbReference>
<dbReference type="GO" id="GO:0017080">
    <property type="term" value="F:sodium channel regulator activity"/>
    <property type="evidence" value="ECO:0007669"/>
    <property type="project" value="UniProtKB-KW"/>
</dbReference>
<dbReference type="GO" id="GO:0090729">
    <property type="term" value="F:toxin activity"/>
    <property type="evidence" value="ECO:0007669"/>
    <property type="project" value="UniProtKB-KW"/>
</dbReference>
<protein>
    <recommendedName>
        <fullName>Insect toxin BmK AngP1</fullName>
    </recommendedName>
</protein>
<proteinExistence type="evidence at protein level"/>
<accession>P0C5S7</accession>